<dbReference type="EC" id="2.4.2.4" evidence="1"/>
<dbReference type="EMBL" id="AE007869">
    <property type="protein sequence ID" value="AAK85954.1"/>
    <property type="molecule type" value="Genomic_DNA"/>
</dbReference>
<dbReference type="PIR" id="A97375">
    <property type="entry name" value="A97375"/>
</dbReference>
<dbReference type="PIR" id="AG2592">
    <property type="entry name" value="AG2592"/>
</dbReference>
<dbReference type="RefSeq" id="NP_353169.1">
    <property type="nucleotide sequence ID" value="NC_003062.2"/>
</dbReference>
<dbReference type="RefSeq" id="WP_010970672.1">
    <property type="nucleotide sequence ID" value="NC_003062.2"/>
</dbReference>
<dbReference type="SMR" id="Q8UJ08"/>
<dbReference type="STRING" id="176299.Atu0133"/>
<dbReference type="EnsemblBacteria" id="AAK85954">
    <property type="protein sequence ID" value="AAK85954"/>
    <property type="gene ID" value="Atu0133"/>
</dbReference>
<dbReference type="GeneID" id="1132171"/>
<dbReference type="KEGG" id="atu:Atu0133"/>
<dbReference type="PATRIC" id="fig|176299.10.peg.124"/>
<dbReference type="eggNOG" id="COG0213">
    <property type="taxonomic scope" value="Bacteria"/>
</dbReference>
<dbReference type="HOGENOM" id="CLU_025040_0_1_5"/>
<dbReference type="OrthoDB" id="9763887at2"/>
<dbReference type="PhylomeDB" id="Q8UJ08"/>
<dbReference type="BioCyc" id="AGRO:ATU0133-MONOMER"/>
<dbReference type="UniPathway" id="UPA00578">
    <property type="reaction ID" value="UER00638"/>
</dbReference>
<dbReference type="Proteomes" id="UP000000813">
    <property type="component" value="Chromosome circular"/>
</dbReference>
<dbReference type="GO" id="GO:0005829">
    <property type="term" value="C:cytosol"/>
    <property type="evidence" value="ECO:0007669"/>
    <property type="project" value="TreeGrafter"/>
</dbReference>
<dbReference type="GO" id="GO:0004645">
    <property type="term" value="F:1,4-alpha-oligoglucan phosphorylase activity"/>
    <property type="evidence" value="ECO:0007669"/>
    <property type="project" value="InterPro"/>
</dbReference>
<dbReference type="GO" id="GO:0009032">
    <property type="term" value="F:thymidine phosphorylase activity"/>
    <property type="evidence" value="ECO:0007669"/>
    <property type="project" value="UniProtKB-UniRule"/>
</dbReference>
<dbReference type="GO" id="GO:0006206">
    <property type="term" value="P:pyrimidine nucleobase metabolic process"/>
    <property type="evidence" value="ECO:0007669"/>
    <property type="project" value="InterPro"/>
</dbReference>
<dbReference type="GO" id="GO:0046104">
    <property type="term" value="P:thymidine metabolic process"/>
    <property type="evidence" value="ECO:0007669"/>
    <property type="project" value="UniProtKB-UniRule"/>
</dbReference>
<dbReference type="FunFam" id="3.40.1030.10:FF:000003">
    <property type="entry name" value="Pyrimidine-nucleoside phosphorylase"/>
    <property type="match status" value="1"/>
</dbReference>
<dbReference type="Gene3D" id="3.40.1030.10">
    <property type="entry name" value="Nucleoside phosphorylase/phosphoribosyltransferase catalytic domain"/>
    <property type="match status" value="1"/>
</dbReference>
<dbReference type="Gene3D" id="3.90.1170.30">
    <property type="entry name" value="Pyrimidine nucleoside phosphorylase-like, C-terminal domain"/>
    <property type="match status" value="1"/>
</dbReference>
<dbReference type="Gene3D" id="1.20.970.10">
    <property type="entry name" value="Transferase, Pyrimidine Nucleoside Phosphorylase, Chain C"/>
    <property type="match status" value="1"/>
</dbReference>
<dbReference type="HAMAP" id="MF_01628">
    <property type="entry name" value="Thymid_phosp"/>
    <property type="match status" value="1"/>
</dbReference>
<dbReference type="InterPro" id="IPR000312">
    <property type="entry name" value="Glycosyl_Trfase_fam3"/>
</dbReference>
<dbReference type="InterPro" id="IPR017459">
    <property type="entry name" value="Glycosyl_Trfase_fam3_N_dom"/>
</dbReference>
<dbReference type="InterPro" id="IPR036320">
    <property type="entry name" value="Glycosyl_Trfase_fam3_N_dom_sf"/>
</dbReference>
<dbReference type="InterPro" id="IPR035902">
    <property type="entry name" value="Nuc_phospho_transferase"/>
</dbReference>
<dbReference type="InterPro" id="IPR036566">
    <property type="entry name" value="PYNP-like_C_sf"/>
</dbReference>
<dbReference type="InterPro" id="IPR013102">
    <property type="entry name" value="PYNP_C"/>
</dbReference>
<dbReference type="InterPro" id="IPR018090">
    <property type="entry name" value="Pyrmidine_PPas_bac/euk"/>
</dbReference>
<dbReference type="InterPro" id="IPR017872">
    <property type="entry name" value="Pyrmidine_PPase_CS"/>
</dbReference>
<dbReference type="InterPro" id="IPR000053">
    <property type="entry name" value="Thymidine/pyrmidine_PPase"/>
</dbReference>
<dbReference type="InterPro" id="IPR013465">
    <property type="entry name" value="Thymidine_Pase"/>
</dbReference>
<dbReference type="NCBIfam" id="NF004490">
    <property type="entry name" value="PRK05820.1"/>
    <property type="match status" value="1"/>
</dbReference>
<dbReference type="NCBIfam" id="TIGR02643">
    <property type="entry name" value="T_phosphoryl"/>
    <property type="match status" value="1"/>
</dbReference>
<dbReference type="NCBIfam" id="TIGR02644">
    <property type="entry name" value="Y_phosphoryl"/>
    <property type="match status" value="1"/>
</dbReference>
<dbReference type="PANTHER" id="PTHR10515">
    <property type="entry name" value="THYMIDINE PHOSPHORYLASE"/>
    <property type="match status" value="1"/>
</dbReference>
<dbReference type="PANTHER" id="PTHR10515:SF0">
    <property type="entry name" value="THYMIDINE PHOSPHORYLASE"/>
    <property type="match status" value="1"/>
</dbReference>
<dbReference type="Pfam" id="PF02885">
    <property type="entry name" value="Glycos_trans_3N"/>
    <property type="match status" value="1"/>
</dbReference>
<dbReference type="Pfam" id="PF00591">
    <property type="entry name" value="Glycos_transf_3"/>
    <property type="match status" value="1"/>
</dbReference>
<dbReference type="Pfam" id="PF07831">
    <property type="entry name" value="PYNP_C"/>
    <property type="match status" value="1"/>
</dbReference>
<dbReference type="PIRSF" id="PIRSF000478">
    <property type="entry name" value="TP_PyNP"/>
    <property type="match status" value="1"/>
</dbReference>
<dbReference type="SMART" id="SM00941">
    <property type="entry name" value="PYNP_C"/>
    <property type="match status" value="1"/>
</dbReference>
<dbReference type="SUPFAM" id="SSF52418">
    <property type="entry name" value="Nucleoside phosphorylase/phosphoribosyltransferase catalytic domain"/>
    <property type="match status" value="1"/>
</dbReference>
<dbReference type="SUPFAM" id="SSF47648">
    <property type="entry name" value="Nucleoside phosphorylase/phosphoribosyltransferase N-terminal domain"/>
    <property type="match status" value="1"/>
</dbReference>
<dbReference type="SUPFAM" id="SSF54680">
    <property type="entry name" value="Pyrimidine nucleoside phosphorylase C-terminal domain"/>
    <property type="match status" value="1"/>
</dbReference>
<dbReference type="PROSITE" id="PS00647">
    <property type="entry name" value="THYMID_PHOSPHORYLASE"/>
    <property type="match status" value="1"/>
</dbReference>
<proteinExistence type="inferred from homology"/>
<evidence type="ECO:0000255" key="1">
    <source>
        <dbReference type="HAMAP-Rule" id="MF_01628"/>
    </source>
</evidence>
<organism>
    <name type="scientific">Agrobacterium fabrum (strain C58 / ATCC 33970)</name>
    <name type="common">Agrobacterium tumefaciens (strain C58)</name>
    <dbReference type="NCBI Taxonomy" id="176299"/>
    <lineage>
        <taxon>Bacteria</taxon>
        <taxon>Pseudomonadati</taxon>
        <taxon>Pseudomonadota</taxon>
        <taxon>Alphaproteobacteria</taxon>
        <taxon>Hyphomicrobiales</taxon>
        <taxon>Rhizobiaceae</taxon>
        <taxon>Rhizobium/Agrobacterium group</taxon>
        <taxon>Agrobacterium</taxon>
        <taxon>Agrobacterium tumefaciens complex</taxon>
    </lineage>
</organism>
<gene>
    <name evidence="1" type="primary">deoA</name>
    <name type="ordered locus">Atu0133</name>
    <name type="ORF">AGR_C_214</name>
</gene>
<sequence>MSLIPQEIIRRKRDGLSLAPQEIAAFIEALSKDGISEGQAAAFAMAVFFRGMNRDEMVALTLAMRDSGDVLSWRDIGRPVADKHSTGGVGDNVSLMLAPIVAACGLAVPMISGRGLGHTGGTLDKLEAIPGYDVMPDEALFRRTVQSVGCAIIGQTGDLAPADKRLYAIRDVTATVDSIPLITASILSKKLAAGLETLVLDVKVGNGAFMQSLEDARILARALVDVANGAGLPTTALITDMNQPLCDAAGNAVEIVNCLEFLAGGKAGTRLEKVVLSFAAEMLVQARKAATLEEGEALASAALSSGRAMEIFARMVSVLGGPSDFIENPSRYLACAPIILPVPAARSGWLASCATRDLGMVVVELGGGRTKPSDTINPAVGISDILPLGVRVEKGEPIAVVHAASSEDAERAVKRIEDCFGIADNAPEIAASVLERIT</sequence>
<protein>
    <recommendedName>
        <fullName evidence="1">Thymidine phosphorylase</fullName>
        <ecNumber evidence="1">2.4.2.4</ecNumber>
    </recommendedName>
    <alternativeName>
        <fullName evidence="1">TdRPase</fullName>
    </alternativeName>
</protein>
<keyword id="KW-0328">Glycosyltransferase</keyword>
<keyword id="KW-1185">Reference proteome</keyword>
<keyword id="KW-0808">Transferase</keyword>
<name>TYPH_AGRFC</name>
<accession>Q8UJ08</accession>
<accession>Q7D248</accession>
<reference key="1">
    <citation type="journal article" date="2001" name="Science">
        <title>The genome of the natural genetic engineer Agrobacterium tumefaciens C58.</title>
        <authorList>
            <person name="Wood D.W."/>
            <person name="Setubal J.C."/>
            <person name="Kaul R."/>
            <person name="Monks D.E."/>
            <person name="Kitajima J.P."/>
            <person name="Okura V.K."/>
            <person name="Zhou Y."/>
            <person name="Chen L."/>
            <person name="Wood G.E."/>
            <person name="Almeida N.F. Jr."/>
            <person name="Woo L."/>
            <person name="Chen Y."/>
            <person name="Paulsen I.T."/>
            <person name="Eisen J.A."/>
            <person name="Karp P.D."/>
            <person name="Bovee D. Sr."/>
            <person name="Chapman P."/>
            <person name="Clendenning J."/>
            <person name="Deatherage G."/>
            <person name="Gillet W."/>
            <person name="Grant C."/>
            <person name="Kutyavin T."/>
            <person name="Levy R."/>
            <person name="Li M.-J."/>
            <person name="McClelland E."/>
            <person name="Palmieri A."/>
            <person name="Raymond C."/>
            <person name="Rouse G."/>
            <person name="Saenphimmachak C."/>
            <person name="Wu Z."/>
            <person name="Romero P."/>
            <person name="Gordon D."/>
            <person name="Zhang S."/>
            <person name="Yoo H."/>
            <person name="Tao Y."/>
            <person name="Biddle P."/>
            <person name="Jung M."/>
            <person name="Krespan W."/>
            <person name="Perry M."/>
            <person name="Gordon-Kamm B."/>
            <person name="Liao L."/>
            <person name="Kim S."/>
            <person name="Hendrick C."/>
            <person name="Zhao Z.-Y."/>
            <person name="Dolan M."/>
            <person name="Chumley F."/>
            <person name="Tingey S.V."/>
            <person name="Tomb J.-F."/>
            <person name="Gordon M.P."/>
            <person name="Olson M.V."/>
            <person name="Nester E.W."/>
        </authorList>
    </citation>
    <scope>NUCLEOTIDE SEQUENCE [LARGE SCALE GENOMIC DNA]</scope>
    <source>
        <strain>C58 / ATCC 33970</strain>
    </source>
</reference>
<reference key="2">
    <citation type="journal article" date="2001" name="Science">
        <title>Genome sequence of the plant pathogen and biotechnology agent Agrobacterium tumefaciens C58.</title>
        <authorList>
            <person name="Goodner B."/>
            <person name="Hinkle G."/>
            <person name="Gattung S."/>
            <person name="Miller N."/>
            <person name="Blanchard M."/>
            <person name="Qurollo B."/>
            <person name="Goldman B.S."/>
            <person name="Cao Y."/>
            <person name="Askenazi M."/>
            <person name="Halling C."/>
            <person name="Mullin L."/>
            <person name="Houmiel K."/>
            <person name="Gordon J."/>
            <person name="Vaudin M."/>
            <person name="Iartchouk O."/>
            <person name="Epp A."/>
            <person name="Liu F."/>
            <person name="Wollam C."/>
            <person name="Allinger M."/>
            <person name="Doughty D."/>
            <person name="Scott C."/>
            <person name="Lappas C."/>
            <person name="Markelz B."/>
            <person name="Flanagan C."/>
            <person name="Crowell C."/>
            <person name="Gurson J."/>
            <person name="Lomo C."/>
            <person name="Sear C."/>
            <person name="Strub G."/>
            <person name="Cielo C."/>
            <person name="Slater S."/>
        </authorList>
    </citation>
    <scope>NUCLEOTIDE SEQUENCE [LARGE SCALE GENOMIC DNA]</scope>
    <source>
        <strain>C58 / ATCC 33970</strain>
    </source>
</reference>
<comment type="function">
    <text evidence="1">The enzymes which catalyze the reversible phosphorolysis of pyrimidine nucleosides are involved in the degradation of these compounds and in their utilization as carbon and energy sources, or in the rescue of pyrimidine bases for nucleotide synthesis.</text>
</comment>
<comment type="catalytic activity">
    <reaction evidence="1">
        <text>thymidine + phosphate = 2-deoxy-alpha-D-ribose 1-phosphate + thymine</text>
        <dbReference type="Rhea" id="RHEA:16037"/>
        <dbReference type="ChEBI" id="CHEBI:17748"/>
        <dbReference type="ChEBI" id="CHEBI:17821"/>
        <dbReference type="ChEBI" id="CHEBI:43474"/>
        <dbReference type="ChEBI" id="CHEBI:57259"/>
        <dbReference type="EC" id="2.4.2.4"/>
    </reaction>
</comment>
<comment type="pathway">
    <text evidence="1">Pyrimidine metabolism; dTMP biosynthesis via salvage pathway; dTMP from thymine: step 1/2.</text>
</comment>
<comment type="subunit">
    <text evidence="1">Homodimer.</text>
</comment>
<comment type="similarity">
    <text evidence="1">Belongs to the thymidine/pyrimidine-nucleoside phosphorylase family.</text>
</comment>
<feature type="chain" id="PRO_0000059048" description="Thymidine phosphorylase">
    <location>
        <begin position="1"/>
        <end position="438"/>
    </location>
</feature>